<proteinExistence type="inferred from homology"/>
<name>RPOC_GEOUR</name>
<comment type="function">
    <text evidence="1">DNA-dependent RNA polymerase catalyzes the transcription of DNA into RNA using the four ribonucleoside triphosphates as substrates.</text>
</comment>
<comment type="catalytic activity">
    <reaction evidence="1">
        <text>RNA(n) + a ribonucleoside 5'-triphosphate = RNA(n+1) + diphosphate</text>
        <dbReference type="Rhea" id="RHEA:21248"/>
        <dbReference type="Rhea" id="RHEA-COMP:14527"/>
        <dbReference type="Rhea" id="RHEA-COMP:17342"/>
        <dbReference type="ChEBI" id="CHEBI:33019"/>
        <dbReference type="ChEBI" id="CHEBI:61557"/>
        <dbReference type="ChEBI" id="CHEBI:140395"/>
        <dbReference type="EC" id="2.7.7.6"/>
    </reaction>
</comment>
<comment type="cofactor">
    <cofactor evidence="1">
        <name>Mg(2+)</name>
        <dbReference type="ChEBI" id="CHEBI:18420"/>
    </cofactor>
    <text evidence="1">Binds 1 Mg(2+) ion per subunit.</text>
</comment>
<comment type="cofactor">
    <cofactor evidence="1">
        <name>Zn(2+)</name>
        <dbReference type="ChEBI" id="CHEBI:29105"/>
    </cofactor>
    <text evidence="1">Binds 2 Zn(2+) ions per subunit.</text>
</comment>
<comment type="subunit">
    <text evidence="1">The RNAP catalytic core consists of 2 alpha, 1 beta, 1 beta' and 1 omega subunit. When a sigma factor is associated with the core the holoenzyme is formed, which can initiate transcription.</text>
</comment>
<comment type="similarity">
    <text evidence="1">Belongs to the RNA polymerase beta' chain family.</text>
</comment>
<organism>
    <name type="scientific">Geotalea uraniireducens (strain Rf4)</name>
    <name type="common">Geobacter uraniireducens</name>
    <dbReference type="NCBI Taxonomy" id="351605"/>
    <lineage>
        <taxon>Bacteria</taxon>
        <taxon>Pseudomonadati</taxon>
        <taxon>Thermodesulfobacteriota</taxon>
        <taxon>Desulfuromonadia</taxon>
        <taxon>Geobacterales</taxon>
        <taxon>Geobacteraceae</taxon>
        <taxon>Geotalea</taxon>
    </lineage>
</organism>
<dbReference type="EC" id="2.7.7.6" evidence="1"/>
<dbReference type="EMBL" id="CP000698">
    <property type="protein sequence ID" value="ABQ25268.1"/>
    <property type="molecule type" value="Genomic_DNA"/>
</dbReference>
<dbReference type="RefSeq" id="WP_011937992.1">
    <property type="nucleotide sequence ID" value="NC_009483.1"/>
</dbReference>
<dbReference type="SMR" id="A5GAY2"/>
<dbReference type="STRING" id="351605.Gura_1062"/>
<dbReference type="KEGG" id="gur:Gura_1062"/>
<dbReference type="HOGENOM" id="CLU_000524_3_1_7"/>
<dbReference type="OrthoDB" id="9815296at2"/>
<dbReference type="Proteomes" id="UP000006695">
    <property type="component" value="Chromosome"/>
</dbReference>
<dbReference type="GO" id="GO:0000428">
    <property type="term" value="C:DNA-directed RNA polymerase complex"/>
    <property type="evidence" value="ECO:0007669"/>
    <property type="project" value="UniProtKB-KW"/>
</dbReference>
<dbReference type="GO" id="GO:0003677">
    <property type="term" value="F:DNA binding"/>
    <property type="evidence" value="ECO:0007669"/>
    <property type="project" value="UniProtKB-UniRule"/>
</dbReference>
<dbReference type="GO" id="GO:0003899">
    <property type="term" value="F:DNA-directed RNA polymerase activity"/>
    <property type="evidence" value="ECO:0007669"/>
    <property type="project" value="UniProtKB-UniRule"/>
</dbReference>
<dbReference type="GO" id="GO:0000287">
    <property type="term" value="F:magnesium ion binding"/>
    <property type="evidence" value="ECO:0007669"/>
    <property type="project" value="UniProtKB-UniRule"/>
</dbReference>
<dbReference type="GO" id="GO:0008270">
    <property type="term" value="F:zinc ion binding"/>
    <property type="evidence" value="ECO:0007669"/>
    <property type="project" value="UniProtKB-UniRule"/>
</dbReference>
<dbReference type="GO" id="GO:0006351">
    <property type="term" value="P:DNA-templated transcription"/>
    <property type="evidence" value="ECO:0007669"/>
    <property type="project" value="UniProtKB-UniRule"/>
</dbReference>
<dbReference type="CDD" id="cd02655">
    <property type="entry name" value="RNAP_beta'_C"/>
    <property type="match status" value="1"/>
</dbReference>
<dbReference type="CDD" id="cd01609">
    <property type="entry name" value="RNAP_beta'_N"/>
    <property type="match status" value="1"/>
</dbReference>
<dbReference type="FunFam" id="1.10.132.30:FF:000003">
    <property type="entry name" value="DNA-directed RNA polymerase subunit beta"/>
    <property type="match status" value="1"/>
</dbReference>
<dbReference type="FunFam" id="1.10.150.390:FF:000002">
    <property type="entry name" value="DNA-directed RNA polymerase subunit beta"/>
    <property type="match status" value="1"/>
</dbReference>
<dbReference type="FunFam" id="1.10.40.90:FF:000001">
    <property type="entry name" value="DNA-directed RNA polymerase subunit beta"/>
    <property type="match status" value="1"/>
</dbReference>
<dbReference type="Gene3D" id="1.10.132.30">
    <property type="match status" value="1"/>
</dbReference>
<dbReference type="Gene3D" id="1.10.150.390">
    <property type="match status" value="1"/>
</dbReference>
<dbReference type="Gene3D" id="1.10.1790.20">
    <property type="match status" value="1"/>
</dbReference>
<dbReference type="Gene3D" id="1.10.40.90">
    <property type="match status" value="1"/>
</dbReference>
<dbReference type="Gene3D" id="2.40.40.20">
    <property type="match status" value="1"/>
</dbReference>
<dbReference type="Gene3D" id="2.40.50.100">
    <property type="match status" value="3"/>
</dbReference>
<dbReference type="Gene3D" id="4.10.860.120">
    <property type="entry name" value="RNA polymerase II, clamp domain"/>
    <property type="match status" value="1"/>
</dbReference>
<dbReference type="Gene3D" id="1.10.274.100">
    <property type="entry name" value="RNA polymerase Rpb1, domain 3"/>
    <property type="match status" value="2"/>
</dbReference>
<dbReference type="HAMAP" id="MF_01322">
    <property type="entry name" value="RNApol_bact_RpoC"/>
    <property type="match status" value="1"/>
</dbReference>
<dbReference type="InterPro" id="IPR045867">
    <property type="entry name" value="DNA-dir_RpoC_beta_prime"/>
</dbReference>
<dbReference type="InterPro" id="IPR012754">
    <property type="entry name" value="DNA-dir_RpoC_beta_prime_bact"/>
</dbReference>
<dbReference type="InterPro" id="IPR000722">
    <property type="entry name" value="RNA_pol_asu"/>
</dbReference>
<dbReference type="InterPro" id="IPR006592">
    <property type="entry name" value="RNA_pol_N"/>
</dbReference>
<dbReference type="InterPro" id="IPR007080">
    <property type="entry name" value="RNA_pol_Rpb1_1"/>
</dbReference>
<dbReference type="InterPro" id="IPR007066">
    <property type="entry name" value="RNA_pol_Rpb1_3"/>
</dbReference>
<dbReference type="InterPro" id="IPR042102">
    <property type="entry name" value="RNA_pol_Rpb1_3_sf"/>
</dbReference>
<dbReference type="InterPro" id="IPR007083">
    <property type="entry name" value="RNA_pol_Rpb1_4"/>
</dbReference>
<dbReference type="InterPro" id="IPR007081">
    <property type="entry name" value="RNA_pol_Rpb1_5"/>
</dbReference>
<dbReference type="InterPro" id="IPR044893">
    <property type="entry name" value="RNA_pol_Rpb1_clamp_domain"/>
</dbReference>
<dbReference type="InterPro" id="IPR038120">
    <property type="entry name" value="Rpb1_funnel_sf"/>
</dbReference>
<dbReference type="NCBIfam" id="TIGR02386">
    <property type="entry name" value="rpoC_TIGR"/>
    <property type="match status" value="1"/>
</dbReference>
<dbReference type="PANTHER" id="PTHR19376">
    <property type="entry name" value="DNA-DIRECTED RNA POLYMERASE"/>
    <property type="match status" value="1"/>
</dbReference>
<dbReference type="PANTHER" id="PTHR19376:SF54">
    <property type="entry name" value="DNA-DIRECTED RNA POLYMERASE SUBUNIT BETA"/>
    <property type="match status" value="1"/>
</dbReference>
<dbReference type="Pfam" id="PF04997">
    <property type="entry name" value="RNA_pol_Rpb1_1"/>
    <property type="match status" value="1"/>
</dbReference>
<dbReference type="Pfam" id="PF00623">
    <property type="entry name" value="RNA_pol_Rpb1_2"/>
    <property type="match status" value="1"/>
</dbReference>
<dbReference type="Pfam" id="PF04983">
    <property type="entry name" value="RNA_pol_Rpb1_3"/>
    <property type="match status" value="1"/>
</dbReference>
<dbReference type="Pfam" id="PF05000">
    <property type="entry name" value="RNA_pol_Rpb1_4"/>
    <property type="match status" value="1"/>
</dbReference>
<dbReference type="Pfam" id="PF04998">
    <property type="entry name" value="RNA_pol_Rpb1_5"/>
    <property type="match status" value="1"/>
</dbReference>
<dbReference type="SMART" id="SM00663">
    <property type="entry name" value="RPOLA_N"/>
    <property type="match status" value="1"/>
</dbReference>
<dbReference type="SUPFAM" id="SSF64484">
    <property type="entry name" value="beta and beta-prime subunits of DNA dependent RNA-polymerase"/>
    <property type="match status" value="1"/>
</dbReference>
<protein>
    <recommendedName>
        <fullName evidence="1">DNA-directed RNA polymerase subunit beta'</fullName>
        <shortName evidence="1">RNAP subunit beta'</shortName>
        <ecNumber evidence="1">2.7.7.6</ecNumber>
    </recommendedName>
    <alternativeName>
        <fullName evidence="1">RNA polymerase subunit beta'</fullName>
    </alternativeName>
    <alternativeName>
        <fullName evidence="1">Transcriptase subunit beta'</fullName>
    </alternativeName>
</protein>
<gene>
    <name evidence="1" type="primary">rpoC</name>
    <name type="ordered locus">Gura_1062</name>
</gene>
<feature type="chain" id="PRO_1000141771" description="DNA-directed RNA polymerase subunit beta'">
    <location>
        <begin position="1"/>
        <end position="1377"/>
    </location>
</feature>
<feature type="binding site" evidence="1">
    <location>
        <position position="70"/>
    </location>
    <ligand>
        <name>Zn(2+)</name>
        <dbReference type="ChEBI" id="CHEBI:29105"/>
        <label>1</label>
    </ligand>
</feature>
<feature type="binding site" evidence="1">
    <location>
        <position position="72"/>
    </location>
    <ligand>
        <name>Zn(2+)</name>
        <dbReference type="ChEBI" id="CHEBI:29105"/>
        <label>1</label>
    </ligand>
</feature>
<feature type="binding site" evidence="1">
    <location>
        <position position="85"/>
    </location>
    <ligand>
        <name>Zn(2+)</name>
        <dbReference type="ChEBI" id="CHEBI:29105"/>
        <label>1</label>
    </ligand>
</feature>
<feature type="binding site" evidence="1">
    <location>
        <position position="88"/>
    </location>
    <ligand>
        <name>Zn(2+)</name>
        <dbReference type="ChEBI" id="CHEBI:29105"/>
        <label>1</label>
    </ligand>
</feature>
<feature type="binding site" evidence="1">
    <location>
        <position position="460"/>
    </location>
    <ligand>
        <name>Mg(2+)</name>
        <dbReference type="ChEBI" id="CHEBI:18420"/>
    </ligand>
</feature>
<feature type="binding site" evidence="1">
    <location>
        <position position="462"/>
    </location>
    <ligand>
        <name>Mg(2+)</name>
        <dbReference type="ChEBI" id="CHEBI:18420"/>
    </ligand>
</feature>
<feature type="binding site" evidence="1">
    <location>
        <position position="464"/>
    </location>
    <ligand>
        <name>Mg(2+)</name>
        <dbReference type="ChEBI" id="CHEBI:18420"/>
    </ligand>
</feature>
<feature type="binding site" evidence="1">
    <location>
        <position position="808"/>
    </location>
    <ligand>
        <name>Zn(2+)</name>
        <dbReference type="ChEBI" id="CHEBI:29105"/>
        <label>2</label>
    </ligand>
</feature>
<feature type="binding site" evidence="1">
    <location>
        <position position="882"/>
    </location>
    <ligand>
        <name>Zn(2+)</name>
        <dbReference type="ChEBI" id="CHEBI:29105"/>
        <label>2</label>
    </ligand>
</feature>
<feature type="binding site" evidence="1">
    <location>
        <position position="889"/>
    </location>
    <ligand>
        <name>Zn(2+)</name>
        <dbReference type="ChEBI" id="CHEBI:29105"/>
        <label>2</label>
    </ligand>
</feature>
<feature type="binding site" evidence="1">
    <location>
        <position position="892"/>
    </location>
    <ligand>
        <name>Zn(2+)</name>
        <dbReference type="ChEBI" id="CHEBI:29105"/>
        <label>2</label>
    </ligand>
</feature>
<evidence type="ECO:0000255" key="1">
    <source>
        <dbReference type="HAMAP-Rule" id="MF_01322"/>
    </source>
</evidence>
<sequence>MEDIFNFFDKPKDPLHFSAIRISVSSPEKIRERSFGEVKKPETINYRTFKPERDGLFCAKIFGPTKDYECNCGKYKRMKHRGIVCEKCGVEVIPSKVRRERLGHIDLATPVAHIWFLKSLPSRIGNLMDITLKDLEKVLYFEAYVVTDPKNTGMPFAQVFSEDQYQKALEEYGGQFEAGMGAAAIRECLKSMDLDVIADQLRVEMLEATSEAKRKKTAKRLKVVEAFKSSGNKPEWMILECIPVLPPELRPLVPLDGGRFATSDLNDLYRRVINRNNRLKRLMELQAPEVIIRNEKRMLQEAVDALFDNGRRGRAIAGPNKRPLKSLSDMLKGKSGRFRQNLLGKRVDYSGRSVIVVGPELRLHQCGLPKKMALELFKPFIYNKLEEKGYVTTIKSAKKMVEKERPEVWDVLEEVIKEHPVMLNRAPTLHRLGIQAFEPVLIEGKAIQLHPLVCTAFNADFDGDQMAVHLPLSVESQVETRVLMMSTNNILSPAHGKPIIVPSQDMVLGIYYMTRDKYFAKGDGKIFASQEEVRIALDADEVDLQARVKVRLKNLVTDDKPLIVETTPGRVVLREILPDAVPFATINKVMTKKELSNLVDVCYRLAGNKETVILADKLKSIGFRYSTIAGISISINDMVIPEGKPAIIGRASEEVKEIQNQYTEGLITDGERYNKVIDIWAKSTEEIAKEMLDNLSRDIVVAPDGKEVKVPSFNAIHMMADSGSRGSAQQIRQLAGMRGLMAKPSGEIIETPITANFREGLTVLQYFISTHGARKGLADTALKTANSGYLTRRLVDVAQDAIITETDCGTLDGLTVSSLTEGGEVIEHIGDRILGRVALDDILDPVTGDVLVPANEEIDETLVQKIESAGLEKVKIRSVLTCQSRRGICAKCYGRDLARGHLVNMGEAVGVIAAQSIGEPGTQLTMRTFHIGGTASRRAEQTSLEARNEGSIKFININYVTNSEGHHIVMNRNGELAIIDETGREREKYAIVYGAKIKVSPTKLIKQGEALAEWDPYTMPILTEIAGKVKFGDILEGVTMEEQVDEVTGLSRKVVVESRDADKRPRITIKDETGKTAKIHEGTMGRYYLPVGANITVQEDSIVNAGDVIAKIPRETTKTKDITGGLPRVAELFEARKPKDFAVISEIDGVVTFGKDAKGKRKVIVTPDMGEPKEYLIPKGKHISVHEGDHVRAGEALMDGSSNPHDILRVLGQKELAKYLVDEVQEVYRLQGVKINDKHIETIVRQMLRRVRIKEVGDTTLLIDDQLERYIFEDENERVLDKGGRPAIAEPLLLGITKASLSTESFISAASFQETTKVLTQASIEGKVDSLRGLKENVIMGRLIPAGTGLARYRNLKLVVEDSGGVSPQPVEEVSAG</sequence>
<accession>A5GAY2</accession>
<reference key="1">
    <citation type="submission" date="2007-05" db="EMBL/GenBank/DDBJ databases">
        <title>Complete sequence of Geobacter uraniireducens Rf4.</title>
        <authorList>
            <consortium name="US DOE Joint Genome Institute"/>
            <person name="Copeland A."/>
            <person name="Lucas S."/>
            <person name="Lapidus A."/>
            <person name="Barry K."/>
            <person name="Detter J.C."/>
            <person name="Glavina del Rio T."/>
            <person name="Hammon N."/>
            <person name="Israni S."/>
            <person name="Dalin E."/>
            <person name="Tice H."/>
            <person name="Pitluck S."/>
            <person name="Chertkov O."/>
            <person name="Brettin T."/>
            <person name="Bruce D."/>
            <person name="Han C."/>
            <person name="Schmutz J."/>
            <person name="Larimer F."/>
            <person name="Land M."/>
            <person name="Hauser L."/>
            <person name="Kyrpides N."/>
            <person name="Mikhailova N."/>
            <person name="Shelobolina E."/>
            <person name="Aklujkar M."/>
            <person name="Lovley D."/>
            <person name="Richardson P."/>
        </authorList>
    </citation>
    <scope>NUCLEOTIDE SEQUENCE [LARGE SCALE GENOMIC DNA]</scope>
    <source>
        <strain>ATCC BAA-1134 / JCM 13001 / Rf4</strain>
    </source>
</reference>
<keyword id="KW-0240">DNA-directed RNA polymerase</keyword>
<keyword id="KW-0460">Magnesium</keyword>
<keyword id="KW-0479">Metal-binding</keyword>
<keyword id="KW-0548">Nucleotidyltransferase</keyword>
<keyword id="KW-1185">Reference proteome</keyword>
<keyword id="KW-0804">Transcription</keyword>
<keyword id="KW-0808">Transferase</keyword>
<keyword id="KW-0862">Zinc</keyword>